<evidence type="ECO:0000305" key="1"/>
<keyword id="KW-1185">Reference proteome</keyword>
<organism>
    <name type="scientific">Autographa californica nuclear polyhedrosis virus</name>
    <name type="common">AcMNPV</name>
    <dbReference type="NCBI Taxonomy" id="46015"/>
    <lineage>
        <taxon>Viruses</taxon>
        <taxon>Viruses incertae sedis</taxon>
        <taxon>Naldaviricetes</taxon>
        <taxon>Lefavirales</taxon>
        <taxon>Baculoviridae</taxon>
        <taxon>Alphabaculovirus</taxon>
        <taxon>Alphabaculovirus aucalifornicae</taxon>
    </lineage>
</organism>
<sequence>MKPTAADIISRATGGRAGNNIVDIIQAHNSPTEGDQLGQFVNRNRSLIKEFVLVVCGFLIFVMIVLFFMLLVVILLNQETITVQKQKYETTLLENYDIRNRNATI</sequence>
<protein>
    <recommendedName>
        <fullName>Uncharacterized 11.8 kDa protein in HE65-PK2 intergenic region</fullName>
    </recommendedName>
</protein>
<feature type="chain" id="PRO_0000133041" description="Uncharacterized 11.8 kDa protein in HE65-PK2 intergenic region">
    <location>
        <begin position="1"/>
        <end position="105"/>
    </location>
</feature>
<comment type="similarity">
    <text evidence="1">Belongs to the baculoviridae 11 kDa protein family.</text>
</comment>
<name>Y108_NPVAC</name>
<accession>P41661</accession>
<organismHost>
    <name type="scientific">Lepidoptera</name>
    <name type="common">butterflies and moths</name>
    <dbReference type="NCBI Taxonomy" id="7088"/>
</organismHost>
<proteinExistence type="inferred from homology"/>
<reference key="1">
    <citation type="journal article" date="1994" name="Virology">
        <title>The complete DNA sequence of Autographa californica nuclear polyhedrosis virus.</title>
        <authorList>
            <person name="Ayres M.D."/>
            <person name="Howard S.C."/>
            <person name="Kuzio J."/>
            <person name="Lopez-Ferber M."/>
            <person name="Possee R.D."/>
        </authorList>
    </citation>
    <scope>NUCLEOTIDE SEQUENCE [LARGE SCALE GENOMIC DNA]</scope>
    <source>
        <strain>C6</strain>
    </source>
</reference>
<dbReference type="EMBL" id="L22858">
    <property type="protein sequence ID" value="AAA66738.1"/>
    <property type="molecule type" value="Genomic_DNA"/>
</dbReference>
<dbReference type="PIR" id="E72863">
    <property type="entry name" value="E72863"/>
</dbReference>
<dbReference type="RefSeq" id="NP_054138.1">
    <property type="nucleotide sequence ID" value="NC_001623.1"/>
</dbReference>
<dbReference type="SMR" id="P41661"/>
<dbReference type="GeneID" id="1403941"/>
<dbReference type="KEGG" id="vg:1403941"/>
<dbReference type="OrthoDB" id="21627at10239"/>
<dbReference type="Proteomes" id="UP000008292">
    <property type="component" value="Segment"/>
</dbReference>
<dbReference type="InterPro" id="IPR009313">
    <property type="entry name" value="Baculo_11_kDa"/>
</dbReference>
<dbReference type="Pfam" id="PF06143">
    <property type="entry name" value="Baculo_11_kDa"/>
    <property type="match status" value="1"/>
</dbReference>